<comment type="function">
    <text evidence="2 3">Required for gamma-tubulin complex recruitment to the microtubule organizing center (MTOC).</text>
</comment>
<comment type="subunit">
    <text evidence="2 3">Part of the gamma-tubulin complex. Interacts directly with alp6/GPC3.</text>
</comment>
<comment type="interaction">
    <interactant intactId="EBI-9549556">
        <id>P0CF96</id>
    </interactant>
    <interactant intactId="EBI-9549762">
        <id>Q9USQ2</id>
        <label>alp6</label>
    </interactant>
    <organismsDiffer>false</organismsDiffer>
    <experiments>6</experiments>
</comment>
<comment type="subcellular location">
    <subcellularLocation>
        <location evidence="2 3">Cytoplasm</location>
        <location evidence="2 3">Cytoskeleton</location>
        <location evidence="2 3">Microtubule organizing center</location>
        <location evidence="2 3">Spindle pole body</location>
    </subcellularLocation>
    <text>Localizes to all the MTOCs, including the SPB and interphase and equatorial MTOCs.</text>
</comment>
<comment type="induction">
    <text evidence="1">Differentially expressed during meiosis.</text>
</comment>
<comment type="similarity">
    <text evidence="4">Belongs to the MOZART1 family.</text>
</comment>
<comment type="sequence caution" evidence="4">
    <conflict type="erroneous initiation">
        <sequence resource="EMBL-CDS" id="CCD31316"/>
    </conflict>
    <text>Extended N-terminus.</text>
</comment>
<keyword id="KW-0002">3D-structure</keyword>
<keyword id="KW-0963">Cytoplasm</keyword>
<keyword id="KW-0206">Cytoskeleton</keyword>
<keyword id="KW-1185">Reference proteome</keyword>
<feature type="chain" id="PRO_0000394216" description="Mitotic-spindle organizing protein 1">
    <location>
        <begin position="1"/>
        <end position="64"/>
    </location>
</feature>
<feature type="helix" evidence="5">
    <location>
        <begin position="5"/>
        <end position="18"/>
    </location>
</feature>
<feature type="helix" evidence="5">
    <location>
        <begin position="25"/>
        <end position="36"/>
    </location>
</feature>
<feature type="helix" evidence="5">
    <location>
        <begin position="41"/>
        <end position="53"/>
    </location>
</feature>
<organism>
    <name type="scientific">Schizosaccharomyces pombe (strain 972 / ATCC 24843)</name>
    <name type="common">Fission yeast</name>
    <dbReference type="NCBI Taxonomy" id="284812"/>
    <lineage>
        <taxon>Eukaryota</taxon>
        <taxon>Fungi</taxon>
        <taxon>Dikarya</taxon>
        <taxon>Ascomycota</taxon>
        <taxon>Taphrinomycotina</taxon>
        <taxon>Schizosaccharomycetes</taxon>
        <taxon>Schizosaccharomycetales</taxon>
        <taxon>Schizosaccharomycetaceae</taxon>
        <taxon>Schizosaccharomyces</taxon>
    </lineage>
</organism>
<accession>P0CF96</accession>
<accession>G2TRK7</accession>
<reference key="1">
    <citation type="journal article" date="2002" name="Nature">
        <title>The genome sequence of Schizosaccharomyces pombe.</title>
        <authorList>
            <person name="Wood V."/>
            <person name="Gwilliam R."/>
            <person name="Rajandream M.A."/>
            <person name="Lyne M.H."/>
            <person name="Lyne R."/>
            <person name="Stewart A."/>
            <person name="Sgouros J.G."/>
            <person name="Peat N."/>
            <person name="Hayles J."/>
            <person name="Baker S.G."/>
            <person name="Basham D."/>
            <person name="Bowman S."/>
            <person name="Brooks K."/>
            <person name="Brown D."/>
            <person name="Brown S."/>
            <person name="Chillingworth T."/>
            <person name="Churcher C.M."/>
            <person name="Collins M."/>
            <person name="Connor R."/>
            <person name="Cronin A."/>
            <person name="Davis P."/>
            <person name="Feltwell T."/>
            <person name="Fraser A."/>
            <person name="Gentles S."/>
            <person name="Goble A."/>
            <person name="Hamlin N."/>
            <person name="Harris D.E."/>
            <person name="Hidalgo J."/>
            <person name="Hodgson G."/>
            <person name="Holroyd S."/>
            <person name="Hornsby T."/>
            <person name="Howarth S."/>
            <person name="Huckle E.J."/>
            <person name="Hunt S."/>
            <person name="Jagels K."/>
            <person name="James K.D."/>
            <person name="Jones L."/>
            <person name="Jones M."/>
            <person name="Leather S."/>
            <person name="McDonald S."/>
            <person name="McLean J."/>
            <person name="Mooney P."/>
            <person name="Moule S."/>
            <person name="Mungall K.L."/>
            <person name="Murphy L.D."/>
            <person name="Niblett D."/>
            <person name="Odell C."/>
            <person name="Oliver K."/>
            <person name="O'Neil S."/>
            <person name="Pearson D."/>
            <person name="Quail M.A."/>
            <person name="Rabbinowitsch E."/>
            <person name="Rutherford K.M."/>
            <person name="Rutter S."/>
            <person name="Saunders D."/>
            <person name="Seeger K."/>
            <person name="Sharp S."/>
            <person name="Skelton J."/>
            <person name="Simmonds M.N."/>
            <person name="Squares R."/>
            <person name="Squares S."/>
            <person name="Stevens K."/>
            <person name="Taylor K."/>
            <person name="Taylor R.G."/>
            <person name="Tivey A."/>
            <person name="Walsh S.V."/>
            <person name="Warren T."/>
            <person name="Whitehead S."/>
            <person name="Woodward J.R."/>
            <person name="Volckaert G."/>
            <person name="Aert R."/>
            <person name="Robben J."/>
            <person name="Grymonprez B."/>
            <person name="Weltjens I."/>
            <person name="Vanstreels E."/>
            <person name="Rieger M."/>
            <person name="Schaefer M."/>
            <person name="Mueller-Auer S."/>
            <person name="Gabel C."/>
            <person name="Fuchs M."/>
            <person name="Duesterhoeft A."/>
            <person name="Fritzc C."/>
            <person name="Holzer E."/>
            <person name="Moestl D."/>
            <person name="Hilbert H."/>
            <person name="Borzym K."/>
            <person name="Langer I."/>
            <person name="Beck A."/>
            <person name="Lehrach H."/>
            <person name="Reinhardt R."/>
            <person name="Pohl T.M."/>
            <person name="Eger P."/>
            <person name="Zimmermann W."/>
            <person name="Wedler H."/>
            <person name="Wambutt R."/>
            <person name="Purnelle B."/>
            <person name="Goffeau A."/>
            <person name="Cadieu E."/>
            <person name="Dreano S."/>
            <person name="Gloux S."/>
            <person name="Lelaure V."/>
            <person name="Mottier S."/>
            <person name="Galibert F."/>
            <person name="Aves S.J."/>
            <person name="Xiang Z."/>
            <person name="Hunt C."/>
            <person name="Moore K."/>
            <person name="Hurst S.M."/>
            <person name="Lucas M."/>
            <person name="Rochet M."/>
            <person name="Gaillardin C."/>
            <person name="Tallada V.A."/>
            <person name="Garzon A."/>
            <person name="Thode G."/>
            <person name="Daga R.R."/>
            <person name="Cruzado L."/>
            <person name="Jimenez J."/>
            <person name="Sanchez M."/>
            <person name="del Rey F."/>
            <person name="Benito J."/>
            <person name="Dominguez A."/>
            <person name="Revuelta J.L."/>
            <person name="Moreno S."/>
            <person name="Armstrong J."/>
            <person name="Forsburg S.L."/>
            <person name="Cerutti L."/>
            <person name="Lowe T."/>
            <person name="McCombie W.R."/>
            <person name="Paulsen I."/>
            <person name="Potashkin J."/>
            <person name="Shpakovski G.V."/>
            <person name="Ussery D."/>
            <person name="Barrell B.G."/>
            <person name="Nurse P."/>
        </authorList>
    </citation>
    <scope>NUCLEOTIDE SEQUENCE [LARGE SCALE GENOMIC DNA]</scope>
    <source>
        <strain>972 / ATCC 24843</strain>
    </source>
</reference>
<reference key="2">
    <citation type="journal article" date="2010" name="Science">
        <title>Systematic analysis of human protein complexes identifies chromosome segregation proteins.</title>
        <authorList>
            <person name="Hutchins J.R."/>
            <person name="Toyoda Y."/>
            <person name="Hegemann B."/>
            <person name="Poser I."/>
            <person name="Heriche J.K."/>
            <person name="Sykora M.M."/>
            <person name="Augsburg M."/>
            <person name="Hudecz O."/>
            <person name="Buschhorn B.A."/>
            <person name="Bulkescher J."/>
            <person name="Conrad C."/>
            <person name="Comartin D."/>
            <person name="Schleiffer A."/>
            <person name="Sarov M."/>
            <person name="Pozniakovsky A."/>
            <person name="Slabicki M.M."/>
            <person name="Schloissnig S."/>
            <person name="Steinmacher I."/>
            <person name="Leuschner M."/>
            <person name="Ssykor A."/>
            <person name="Lawo S."/>
            <person name="Pelletier L."/>
            <person name="Stark H."/>
            <person name="Nasmyth K."/>
            <person name="Ellenberg J."/>
            <person name="Durbin R."/>
            <person name="Buchholz F."/>
            <person name="Mechtler K."/>
            <person name="Hyman A.A."/>
            <person name="Peters J.M."/>
        </authorList>
    </citation>
    <scope>IDENTIFICATION</scope>
</reference>
<reference key="3">
    <citation type="journal article" date="2011" name="Genetics">
        <title>Augmented annotation of the Schizosaccharomyces pombe genome reveals additional genes required for growth and viability.</title>
        <authorList>
            <person name="Bitton D.A."/>
            <person name="Wood V."/>
            <person name="Scutt P.J."/>
            <person name="Grallert A."/>
            <person name="Yates T."/>
            <person name="Smith D.L."/>
            <person name="Hagan I.M."/>
            <person name="Miller C.J."/>
        </authorList>
    </citation>
    <scope>IDENTIFICATION</scope>
    <scope>INDUCTION</scope>
</reference>
<reference key="4">
    <citation type="journal article" date="2013" name="Mol. Biol. Cell">
        <title>Fission yeast MOZART1/Mzt1 is an essential gamma-tubulin complex component required for complex recruitment to the microtubule organizing center, but not its assembly.</title>
        <authorList>
            <person name="Masuda H."/>
            <person name="Mori R."/>
            <person name="Yukawa M."/>
            <person name="Toda T."/>
        </authorList>
    </citation>
    <scope>FUNCTION</scope>
    <scope>IDENTIFICATION OF PROBABLE INITIATION SITE</scope>
    <scope>SUBCELLULAR LOCATION</scope>
    <scope>SUBUNIT</scope>
</reference>
<reference key="5">
    <citation type="journal article" date="2013" name="Mol. Biol. Cell">
        <title>Mzt1/Tam4, a fission yeast MOZART1 homologue, is an essential component of the gamma-tubulin complex and directly interacts with GCP3(Alp6).</title>
        <authorList>
            <person name="Dhani D.K."/>
            <person name="Goult B.T."/>
            <person name="George G.M."/>
            <person name="Rogerson D.T."/>
            <person name="Bitton D.A."/>
            <person name="Miller C.J."/>
            <person name="Schwabe J.W."/>
            <person name="Tanaka K."/>
        </authorList>
    </citation>
    <scope>FUNCTION</scope>
    <scope>IDENTIFICATION OF PROBABLE INITIATION SITE</scope>
    <scope>SUBCELLULAR LOCATION</scope>
    <scope>INTERACTION WITH ALP6</scope>
</reference>
<evidence type="ECO:0000269" key="1">
    <source>
    </source>
</evidence>
<evidence type="ECO:0000269" key="2">
    <source>
    </source>
</evidence>
<evidence type="ECO:0000269" key="3">
    <source>
    </source>
</evidence>
<evidence type="ECO:0000305" key="4"/>
<evidence type="ECO:0007829" key="5">
    <source>
        <dbReference type="PDB" id="6L80"/>
    </source>
</evidence>
<name>MZT1_SCHPO</name>
<sequence>MSESTKETIEVLYEIGTLLGTELDKTTLSLCISLCENNVHPEAIAQIIREIRMAQEQTVDTEPS</sequence>
<proteinExistence type="evidence at protein level"/>
<dbReference type="EMBL" id="CU329670">
    <property type="protein sequence ID" value="CCD31316.1"/>
    <property type="status" value="ALT_INIT"/>
    <property type="molecule type" value="Genomic_DNA"/>
</dbReference>
<dbReference type="PDB" id="6L80">
    <property type="method" value="X-ray"/>
    <property type="resolution" value="2.00 A"/>
    <property type="chains" value="B/D=1-64"/>
</dbReference>
<dbReference type="PDBsum" id="6L80"/>
<dbReference type="SMR" id="P0CF96"/>
<dbReference type="FunCoup" id="P0CF96">
    <property type="interactions" value="142"/>
</dbReference>
<dbReference type="IntAct" id="P0CF96">
    <property type="interactions" value="2"/>
</dbReference>
<dbReference type="STRING" id="284812.P0CF96"/>
<dbReference type="PaxDb" id="4896-SPAC9G1.15c.1"/>
<dbReference type="EnsemblFungi" id="SPAC9G1.15c.1">
    <property type="protein sequence ID" value="SPAC9G1.15c.1:pep"/>
    <property type="gene ID" value="SPAC9G1.15c"/>
</dbReference>
<dbReference type="PomBase" id="SPAC9G1.15c">
    <property type="gene designation" value="mzt1"/>
</dbReference>
<dbReference type="VEuPathDB" id="FungiDB:SPAC9G1.15c"/>
<dbReference type="eggNOG" id="ENOG502S6UI">
    <property type="taxonomic scope" value="Eukaryota"/>
</dbReference>
<dbReference type="HOGENOM" id="CLU_160285_0_1_1"/>
<dbReference type="InParanoid" id="P0CF96"/>
<dbReference type="PRO" id="PR:P0CF96"/>
<dbReference type="Proteomes" id="UP000002485">
    <property type="component" value="Chromosome I"/>
</dbReference>
<dbReference type="GO" id="GO:0005737">
    <property type="term" value="C:cytoplasm"/>
    <property type="evidence" value="ECO:0007669"/>
    <property type="project" value="UniProtKB-KW"/>
</dbReference>
<dbReference type="GO" id="GO:0000923">
    <property type="term" value="C:equatorial microtubule organizing center"/>
    <property type="evidence" value="ECO:0000314"/>
    <property type="project" value="PomBase"/>
</dbReference>
<dbReference type="GO" id="GO:0000930">
    <property type="term" value="C:gamma-tubulin complex"/>
    <property type="evidence" value="ECO:0000318"/>
    <property type="project" value="GO_Central"/>
</dbReference>
<dbReference type="GO" id="GO:0000931">
    <property type="term" value="C:gamma-tubulin ring complex"/>
    <property type="evidence" value="ECO:0000266"/>
    <property type="project" value="PomBase"/>
</dbReference>
<dbReference type="GO" id="GO:0008275">
    <property type="term" value="C:gamma-tubulin small complex"/>
    <property type="evidence" value="ECO:0000314"/>
    <property type="project" value="PomBase"/>
</dbReference>
<dbReference type="GO" id="GO:0061497">
    <property type="term" value="C:inner plaque of mitotic spindle pole body"/>
    <property type="evidence" value="ECO:0000314"/>
    <property type="project" value="PomBase"/>
</dbReference>
<dbReference type="GO" id="GO:0031021">
    <property type="term" value="C:interphase microtubule organizing center"/>
    <property type="evidence" value="ECO:0000314"/>
    <property type="project" value="PomBase"/>
</dbReference>
<dbReference type="GO" id="GO:0044732">
    <property type="term" value="C:mitotic spindle pole body"/>
    <property type="evidence" value="ECO:0000314"/>
    <property type="project" value="PomBase"/>
</dbReference>
<dbReference type="GO" id="GO:0005634">
    <property type="term" value="C:nucleus"/>
    <property type="evidence" value="ECO:0000250"/>
    <property type="project" value="PomBase"/>
</dbReference>
<dbReference type="GO" id="GO:0005819">
    <property type="term" value="C:spindle"/>
    <property type="evidence" value="ECO:0000318"/>
    <property type="project" value="GO_Central"/>
</dbReference>
<dbReference type="GO" id="GO:0140475">
    <property type="term" value="F:spindle pole body anchor activity"/>
    <property type="evidence" value="ECO:0000353"/>
    <property type="project" value="PomBase"/>
</dbReference>
<dbReference type="GO" id="GO:0033566">
    <property type="term" value="P:gamma-tubulin complex localization"/>
    <property type="evidence" value="ECO:0007669"/>
    <property type="project" value="InterPro"/>
</dbReference>
<dbReference type="GO" id="GO:0051415">
    <property type="term" value="P:microtubule nucleation by interphase microtubule organizing center"/>
    <property type="evidence" value="ECO:0000315"/>
    <property type="project" value="PomBase"/>
</dbReference>
<dbReference type="GO" id="GO:0051417">
    <property type="term" value="P:microtubule nucleation by spindle pole body"/>
    <property type="evidence" value="ECO:0000315"/>
    <property type="project" value="PomBase"/>
</dbReference>
<dbReference type="GO" id="GO:0090307">
    <property type="term" value="P:mitotic spindle assembly"/>
    <property type="evidence" value="ECO:0000315"/>
    <property type="project" value="PomBase"/>
</dbReference>
<dbReference type="InterPro" id="IPR022214">
    <property type="entry name" value="MZT1"/>
</dbReference>
<dbReference type="PANTHER" id="PTHR28520">
    <property type="entry name" value="MITOTIC-SPINDLE ORGANIZING PROTEIN 1"/>
    <property type="match status" value="1"/>
</dbReference>
<dbReference type="PANTHER" id="PTHR28520:SF2">
    <property type="entry name" value="MITOTIC-SPINDLE ORGANIZING PROTEIN 1"/>
    <property type="match status" value="1"/>
</dbReference>
<dbReference type="Pfam" id="PF12554">
    <property type="entry name" value="MOZART1"/>
    <property type="match status" value="1"/>
</dbReference>
<gene>
    <name type="primary">mzt1</name>
    <name type="synonym">tam4</name>
    <name type="ORF">SPAC9G1.15c</name>
</gene>
<protein>
    <recommendedName>
        <fullName>Mitotic-spindle organizing protein 1</fullName>
    </recommendedName>
    <alternativeName>
        <fullName>Mitotic-spindle organizing protein associated with a ring of gamma-tubulin 1</fullName>
    </alternativeName>
    <alternativeName>
        <fullName>Transcripts altered in meiosis protein 4</fullName>
    </alternativeName>
</protein>